<comment type="subcellular location">
    <subcellularLocation>
        <location evidence="1">Cytoplasm</location>
    </subcellularLocation>
</comment>
<comment type="induction">
    <text>By interferons.</text>
</comment>
<comment type="similarity">
    <text evidence="4">Belongs to the TRAFAC class dynamin-like GTPase superfamily. Dynamin/Fzo/YdjA family.</text>
</comment>
<name>MX2_ICTPU</name>
<organism>
    <name type="scientific">Ictalurus punctatus</name>
    <name type="common">Channel catfish</name>
    <name type="synonym">Silurus punctatus</name>
    <dbReference type="NCBI Taxonomy" id="7998"/>
    <lineage>
        <taxon>Eukaryota</taxon>
        <taxon>Metazoa</taxon>
        <taxon>Chordata</taxon>
        <taxon>Craniata</taxon>
        <taxon>Vertebrata</taxon>
        <taxon>Euteleostomi</taxon>
        <taxon>Actinopterygii</taxon>
        <taxon>Neopterygii</taxon>
        <taxon>Teleostei</taxon>
        <taxon>Ostariophysi</taxon>
        <taxon>Siluriformes</taxon>
        <taxon>Ictaluridae</taxon>
        <taxon>Ictalurus</taxon>
    </lineage>
</organism>
<proteinExistence type="evidence at transcript level"/>
<feature type="chain" id="PRO_0000292874" description="Interferon-induced GTP-binding protein Mx2">
    <location>
        <begin position="1"/>
        <end position="625"/>
    </location>
</feature>
<feature type="domain" description="Dynamin-type G" evidence="4">
    <location>
        <begin position="29"/>
        <end position="302"/>
    </location>
</feature>
<feature type="domain" description="GED" evidence="3">
    <location>
        <begin position="539"/>
        <end position="625"/>
    </location>
</feature>
<feature type="region of interest" description="G1 motif" evidence="4">
    <location>
        <begin position="39"/>
        <end position="46"/>
    </location>
</feature>
<feature type="region of interest" description="G2 motif" evidence="4">
    <location>
        <begin position="64"/>
        <end position="66"/>
    </location>
</feature>
<feature type="region of interest" description="G3 motif" evidence="4">
    <location>
        <begin position="140"/>
        <end position="143"/>
    </location>
</feature>
<feature type="region of interest" description="G4 motif" evidence="4">
    <location>
        <begin position="209"/>
        <end position="212"/>
    </location>
</feature>
<feature type="region of interest" description="G5 motif" evidence="4">
    <location>
        <begin position="241"/>
        <end position="244"/>
    </location>
</feature>
<feature type="binding site" evidence="2">
    <location>
        <begin position="39"/>
        <end position="46"/>
    </location>
    <ligand>
        <name>GTP</name>
        <dbReference type="ChEBI" id="CHEBI:37565"/>
    </ligand>
</feature>
<feature type="binding site" evidence="2">
    <location>
        <begin position="140"/>
        <end position="144"/>
    </location>
    <ligand>
        <name>GTP</name>
        <dbReference type="ChEBI" id="CHEBI:37565"/>
    </ligand>
</feature>
<feature type="binding site" evidence="2">
    <location>
        <begin position="209"/>
        <end position="212"/>
    </location>
    <ligand>
        <name>GTP</name>
        <dbReference type="ChEBI" id="CHEBI:37565"/>
    </ligand>
</feature>
<accession>Q4U4N4</accession>
<protein>
    <recommendedName>
        <fullName>Interferon-induced GTP-binding protein Mx2</fullName>
    </recommendedName>
    <alternativeName>
        <fullName>Interferon-inducible Mx2 protein</fullName>
    </alternativeName>
</protein>
<dbReference type="EMBL" id="DQ011854">
    <property type="protein sequence ID" value="AAY33864.1"/>
    <property type="molecule type" value="mRNA"/>
</dbReference>
<dbReference type="RefSeq" id="NP_001187140.1">
    <property type="nucleotide sequence ID" value="NM_001200211.1"/>
</dbReference>
<dbReference type="SMR" id="Q4U4N4"/>
<dbReference type="STRING" id="7998.ENSIPUP00000002525"/>
<dbReference type="GeneID" id="100304652"/>
<dbReference type="KEGG" id="ipu:100304652"/>
<dbReference type="CTD" id="4600"/>
<dbReference type="OrthoDB" id="5061070at2759"/>
<dbReference type="Proteomes" id="UP000221080">
    <property type="component" value="Chromosome 26"/>
</dbReference>
<dbReference type="GO" id="GO:0005737">
    <property type="term" value="C:cytoplasm"/>
    <property type="evidence" value="ECO:0007669"/>
    <property type="project" value="UniProtKB-SubCell"/>
</dbReference>
<dbReference type="GO" id="GO:0005874">
    <property type="term" value="C:microtubule"/>
    <property type="evidence" value="ECO:0007669"/>
    <property type="project" value="TreeGrafter"/>
</dbReference>
<dbReference type="GO" id="GO:0005634">
    <property type="term" value="C:nucleus"/>
    <property type="evidence" value="ECO:0007669"/>
    <property type="project" value="TreeGrafter"/>
</dbReference>
<dbReference type="GO" id="GO:0005886">
    <property type="term" value="C:plasma membrane"/>
    <property type="evidence" value="ECO:0007669"/>
    <property type="project" value="TreeGrafter"/>
</dbReference>
<dbReference type="GO" id="GO:0098793">
    <property type="term" value="C:presynapse"/>
    <property type="evidence" value="ECO:0007669"/>
    <property type="project" value="GOC"/>
</dbReference>
<dbReference type="GO" id="GO:0005525">
    <property type="term" value="F:GTP binding"/>
    <property type="evidence" value="ECO:0007669"/>
    <property type="project" value="UniProtKB-KW"/>
</dbReference>
<dbReference type="GO" id="GO:0003924">
    <property type="term" value="F:GTPase activity"/>
    <property type="evidence" value="ECO:0007669"/>
    <property type="project" value="InterPro"/>
</dbReference>
<dbReference type="GO" id="GO:0008017">
    <property type="term" value="F:microtubule binding"/>
    <property type="evidence" value="ECO:0007669"/>
    <property type="project" value="TreeGrafter"/>
</dbReference>
<dbReference type="GO" id="GO:0051607">
    <property type="term" value="P:defense response to virus"/>
    <property type="evidence" value="ECO:0007669"/>
    <property type="project" value="TreeGrafter"/>
</dbReference>
<dbReference type="GO" id="GO:0031623">
    <property type="term" value="P:receptor internalization"/>
    <property type="evidence" value="ECO:0007669"/>
    <property type="project" value="TreeGrafter"/>
</dbReference>
<dbReference type="GO" id="GO:0016185">
    <property type="term" value="P:synaptic vesicle budding from presynaptic endocytic zone membrane"/>
    <property type="evidence" value="ECO:0007669"/>
    <property type="project" value="TreeGrafter"/>
</dbReference>
<dbReference type="CDD" id="cd08771">
    <property type="entry name" value="DLP_1"/>
    <property type="match status" value="1"/>
</dbReference>
<dbReference type="FunFam" id="1.20.120.1240:FF:000007">
    <property type="entry name" value="Interferon-induced GTP-binding protein Mx1"/>
    <property type="match status" value="1"/>
</dbReference>
<dbReference type="FunFam" id="3.40.50.300:FF:000621">
    <property type="entry name" value="Interferon-induced GTP-binding protein Mx1"/>
    <property type="match status" value="1"/>
</dbReference>
<dbReference type="Gene3D" id="1.20.120.1240">
    <property type="entry name" value="Dynamin, middle domain"/>
    <property type="match status" value="1"/>
</dbReference>
<dbReference type="Gene3D" id="3.40.50.300">
    <property type="entry name" value="P-loop containing nucleotide triphosphate hydrolases"/>
    <property type="match status" value="1"/>
</dbReference>
<dbReference type="InterPro" id="IPR022812">
    <property type="entry name" value="Dynamin"/>
</dbReference>
<dbReference type="InterPro" id="IPR001401">
    <property type="entry name" value="Dynamin_GTPase"/>
</dbReference>
<dbReference type="InterPro" id="IPR019762">
    <property type="entry name" value="Dynamin_GTPase_CS"/>
</dbReference>
<dbReference type="InterPro" id="IPR045063">
    <property type="entry name" value="Dynamin_N"/>
</dbReference>
<dbReference type="InterPro" id="IPR000375">
    <property type="entry name" value="Dynamin_stalk"/>
</dbReference>
<dbReference type="InterPro" id="IPR030381">
    <property type="entry name" value="G_DYNAMIN_dom"/>
</dbReference>
<dbReference type="InterPro" id="IPR003130">
    <property type="entry name" value="GED"/>
</dbReference>
<dbReference type="InterPro" id="IPR020850">
    <property type="entry name" value="GED_dom"/>
</dbReference>
<dbReference type="InterPro" id="IPR027417">
    <property type="entry name" value="P-loop_NTPase"/>
</dbReference>
<dbReference type="PANTHER" id="PTHR11566">
    <property type="entry name" value="DYNAMIN"/>
    <property type="match status" value="1"/>
</dbReference>
<dbReference type="PANTHER" id="PTHR11566:SF225">
    <property type="entry name" value="INTERFERON-INDUCED GTP-BINDING PROTEIN MX-RELATED"/>
    <property type="match status" value="1"/>
</dbReference>
<dbReference type="Pfam" id="PF01031">
    <property type="entry name" value="Dynamin_M"/>
    <property type="match status" value="1"/>
</dbReference>
<dbReference type="Pfam" id="PF00350">
    <property type="entry name" value="Dynamin_N"/>
    <property type="match status" value="1"/>
</dbReference>
<dbReference type="Pfam" id="PF02212">
    <property type="entry name" value="GED"/>
    <property type="match status" value="1"/>
</dbReference>
<dbReference type="PRINTS" id="PR00195">
    <property type="entry name" value="DYNAMIN"/>
</dbReference>
<dbReference type="SMART" id="SM00053">
    <property type="entry name" value="DYNc"/>
    <property type="match status" value="1"/>
</dbReference>
<dbReference type="SMART" id="SM00302">
    <property type="entry name" value="GED"/>
    <property type="match status" value="1"/>
</dbReference>
<dbReference type="SUPFAM" id="SSF52540">
    <property type="entry name" value="P-loop containing nucleoside triphosphate hydrolases"/>
    <property type="match status" value="1"/>
</dbReference>
<dbReference type="PROSITE" id="PS00410">
    <property type="entry name" value="G_DYNAMIN_1"/>
    <property type="match status" value="1"/>
</dbReference>
<dbReference type="PROSITE" id="PS51718">
    <property type="entry name" value="G_DYNAMIN_2"/>
    <property type="match status" value="1"/>
</dbReference>
<dbReference type="PROSITE" id="PS51388">
    <property type="entry name" value="GED"/>
    <property type="match status" value="1"/>
</dbReference>
<sequence length="625" mass="71849">MSLSEQYEEKVRPCIDLIDSLRALGVEKDLALPAIAVIGDQSSGKSSVLEALSGVALPRGSGIVTRCPLELKMKKSRKADFWHGKIKYEDYEEEIEDPADVEQMIRKAQNEIAGTGMGISDKLISLEVTSSNVPDLTVIDLPGITRVAVKDQPENIGDQSKRLIKKFITKQETINLVVVPCNVDIATTEALKMALEVDPNGERTFGVLTKPDLVDKGSEETVVSIINNEIVYLNKGYIIVRCRGQQEIKDRVSLNETVKRERDFFEDHPHFRTLYDNRKATIPNLAEKLTLELVFHIGRCLPRLEERIQVKLSETQAELDRYGSGTPTEPEQRIYFLTDKITAFIQDVLNLTTGEEVKSMLYMNIFPDLRKQFDLWKNDLDSVGETFNKKIEKEMKAYEEKYRGRELPGFLKYNTFEVIVKGQIKQLEEPAIRRLKEISDLIKREFSQLAHSNFPGFPNILKMAKTKIDNIKQVKESETESILRTQFKMEMMIYTQDKTHHDNLKMLKSKEEGKERQKLGVAHSPSHKLYDHSDSEGIREELTCHLKSYFSIVTKRLADQVPMVIRYMMLQESAAQLQREMIQLIQDRHNIEELLKEDHDIASKRNNLHSCQKRLTEALKYLAKF</sequence>
<gene>
    <name type="primary">mx2</name>
</gene>
<evidence type="ECO:0000250" key="1"/>
<evidence type="ECO:0000255" key="2"/>
<evidence type="ECO:0000255" key="3">
    <source>
        <dbReference type="PROSITE-ProRule" id="PRU00720"/>
    </source>
</evidence>
<evidence type="ECO:0000255" key="4">
    <source>
        <dbReference type="PROSITE-ProRule" id="PRU01055"/>
    </source>
</evidence>
<reference key="1">
    <citation type="submission" date="2005-04" db="EMBL/GenBank/DDBJ databases">
        <title>Cloning and sequencing of channel catfish Mx2.</title>
        <authorList>
            <person name="Plant K.P."/>
            <person name="Thune R.L."/>
        </authorList>
    </citation>
    <scope>NUCLEOTIDE SEQUENCE [MRNA]</scope>
</reference>
<keyword id="KW-0963">Cytoplasm</keyword>
<keyword id="KW-0342">GTP-binding</keyword>
<keyword id="KW-0547">Nucleotide-binding</keyword>